<evidence type="ECO:0000255" key="1">
    <source>
        <dbReference type="HAMAP-Rule" id="MF_00394"/>
    </source>
</evidence>
<sequence length="341" mass="35850">MSTTADKIAVLGAGSWGTALASLLARHGHPTVLWGRDAAMVEAIDQRHENPRYLPGIPLPDSLRATTDLASAVEGAAWILVVTPSHAFGETVRALAPLRPAGAGVAWATKGFEPGSGRFLHEVAREVLGEDVPLAVVTGPSFAKEVTQGLPTAITVHGDVPEFAQTVAEAMHGPAFRAYTGDDMVGAELGGAMKNVLAVATGVADGMQLGLNARAGLITRGLNEMLRLAAAIGAKPETLMGLAGLGDLVLTCTGDLSRNRRLGLALGRGQTLQDAVREIGQVVESVQTADEVMRQARRHGIDLPISDRVRAVLHGEQTPEEGLRALLAREQKPEYPDTLFK</sequence>
<name>GPDA_STRM5</name>
<proteinExistence type="inferred from homology"/>
<feature type="chain" id="PRO_1000123193" description="Glycerol-3-phosphate dehydrogenase [NAD(P)+]">
    <location>
        <begin position="1"/>
        <end position="341"/>
    </location>
</feature>
<feature type="active site" description="Proton acceptor" evidence="1">
    <location>
        <position position="194"/>
    </location>
</feature>
<feature type="binding site" evidence="1">
    <location>
        <position position="15"/>
    </location>
    <ligand>
        <name>NADPH</name>
        <dbReference type="ChEBI" id="CHEBI:57783"/>
    </ligand>
</feature>
<feature type="binding site" evidence="1">
    <location>
        <position position="16"/>
    </location>
    <ligand>
        <name>NADPH</name>
        <dbReference type="ChEBI" id="CHEBI:57783"/>
    </ligand>
</feature>
<feature type="binding site" evidence="1">
    <location>
        <position position="36"/>
    </location>
    <ligand>
        <name>NADPH</name>
        <dbReference type="ChEBI" id="CHEBI:57783"/>
    </ligand>
</feature>
<feature type="binding site" evidence="1">
    <location>
        <position position="110"/>
    </location>
    <ligand>
        <name>NADPH</name>
        <dbReference type="ChEBI" id="CHEBI:57783"/>
    </ligand>
</feature>
<feature type="binding site" evidence="1">
    <location>
        <position position="110"/>
    </location>
    <ligand>
        <name>sn-glycerol 3-phosphate</name>
        <dbReference type="ChEBI" id="CHEBI:57597"/>
    </ligand>
</feature>
<feature type="binding site" evidence="1">
    <location>
        <position position="139"/>
    </location>
    <ligand>
        <name>sn-glycerol 3-phosphate</name>
        <dbReference type="ChEBI" id="CHEBI:57597"/>
    </ligand>
</feature>
<feature type="binding site" evidence="1">
    <location>
        <position position="141"/>
    </location>
    <ligand>
        <name>sn-glycerol 3-phosphate</name>
        <dbReference type="ChEBI" id="CHEBI:57597"/>
    </ligand>
</feature>
<feature type="binding site" evidence="1">
    <location>
        <position position="143"/>
    </location>
    <ligand>
        <name>NADPH</name>
        <dbReference type="ChEBI" id="CHEBI:57783"/>
    </ligand>
</feature>
<feature type="binding site" evidence="1">
    <location>
        <position position="194"/>
    </location>
    <ligand>
        <name>sn-glycerol 3-phosphate</name>
        <dbReference type="ChEBI" id="CHEBI:57597"/>
    </ligand>
</feature>
<feature type="binding site" evidence="1">
    <location>
        <position position="247"/>
    </location>
    <ligand>
        <name>sn-glycerol 3-phosphate</name>
        <dbReference type="ChEBI" id="CHEBI:57597"/>
    </ligand>
</feature>
<feature type="binding site" evidence="1">
    <location>
        <position position="257"/>
    </location>
    <ligand>
        <name>sn-glycerol 3-phosphate</name>
        <dbReference type="ChEBI" id="CHEBI:57597"/>
    </ligand>
</feature>
<feature type="binding site" evidence="1">
    <location>
        <position position="258"/>
    </location>
    <ligand>
        <name>NADPH</name>
        <dbReference type="ChEBI" id="CHEBI:57783"/>
    </ligand>
</feature>
<feature type="binding site" evidence="1">
    <location>
        <position position="258"/>
    </location>
    <ligand>
        <name>sn-glycerol 3-phosphate</name>
        <dbReference type="ChEBI" id="CHEBI:57597"/>
    </ligand>
</feature>
<feature type="binding site" evidence="1">
    <location>
        <position position="259"/>
    </location>
    <ligand>
        <name>sn-glycerol 3-phosphate</name>
        <dbReference type="ChEBI" id="CHEBI:57597"/>
    </ligand>
</feature>
<feature type="binding site" evidence="1">
    <location>
        <position position="282"/>
    </location>
    <ligand>
        <name>NADPH</name>
        <dbReference type="ChEBI" id="CHEBI:57783"/>
    </ligand>
</feature>
<feature type="binding site" evidence="1">
    <location>
        <position position="284"/>
    </location>
    <ligand>
        <name>NADPH</name>
        <dbReference type="ChEBI" id="CHEBI:57783"/>
    </ligand>
</feature>
<comment type="function">
    <text evidence="1">Catalyzes the reduction of the glycolytic intermediate dihydroxyacetone phosphate (DHAP) to sn-glycerol 3-phosphate (G3P), the key precursor for phospholipid synthesis.</text>
</comment>
<comment type="catalytic activity">
    <reaction evidence="1">
        <text>sn-glycerol 3-phosphate + NAD(+) = dihydroxyacetone phosphate + NADH + H(+)</text>
        <dbReference type="Rhea" id="RHEA:11092"/>
        <dbReference type="ChEBI" id="CHEBI:15378"/>
        <dbReference type="ChEBI" id="CHEBI:57540"/>
        <dbReference type="ChEBI" id="CHEBI:57597"/>
        <dbReference type="ChEBI" id="CHEBI:57642"/>
        <dbReference type="ChEBI" id="CHEBI:57945"/>
        <dbReference type="EC" id="1.1.1.94"/>
    </reaction>
    <physiologicalReaction direction="right-to-left" evidence="1">
        <dbReference type="Rhea" id="RHEA:11094"/>
    </physiologicalReaction>
</comment>
<comment type="catalytic activity">
    <reaction evidence="1">
        <text>sn-glycerol 3-phosphate + NADP(+) = dihydroxyacetone phosphate + NADPH + H(+)</text>
        <dbReference type="Rhea" id="RHEA:11096"/>
        <dbReference type="ChEBI" id="CHEBI:15378"/>
        <dbReference type="ChEBI" id="CHEBI:57597"/>
        <dbReference type="ChEBI" id="CHEBI:57642"/>
        <dbReference type="ChEBI" id="CHEBI:57783"/>
        <dbReference type="ChEBI" id="CHEBI:58349"/>
        <dbReference type="EC" id="1.1.1.94"/>
    </reaction>
    <physiologicalReaction direction="right-to-left" evidence="1">
        <dbReference type="Rhea" id="RHEA:11098"/>
    </physiologicalReaction>
</comment>
<comment type="pathway">
    <text evidence="1">Membrane lipid metabolism; glycerophospholipid metabolism.</text>
</comment>
<comment type="subcellular location">
    <subcellularLocation>
        <location evidence="1">Cytoplasm</location>
    </subcellularLocation>
</comment>
<comment type="similarity">
    <text evidence="1">Belongs to the NAD-dependent glycerol-3-phosphate dehydrogenase family.</text>
</comment>
<organism>
    <name type="scientific">Stenotrophomonas maltophilia (strain R551-3)</name>
    <dbReference type="NCBI Taxonomy" id="391008"/>
    <lineage>
        <taxon>Bacteria</taxon>
        <taxon>Pseudomonadati</taxon>
        <taxon>Pseudomonadota</taxon>
        <taxon>Gammaproteobacteria</taxon>
        <taxon>Lysobacterales</taxon>
        <taxon>Lysobacteraceae</taxon>
        <taxon>Stenotrophomonas</taxon>
        <taxon>Stenotrophomonas maltophilia group</taxon>
    </lineage>
</organism>
<keyword id="KW-0963">Cytoplasm</keyword>
<keyword id="KW-0444">Lipid biosynthesis</keyword>
<keyword id="KW-0443">Lipid metabolism</keyword>
<keyword id="KW-0520">NAD</keyword>
<keyword id="KW-0521">NADP</keyword>
<keyword id="KW-0547">Nucleotide-binding</keyword>
<keyword id="KW-0560">Oxidoreductase</keyword>
<keyword id="KW-0594">Phospholipid biosynthesis</keyword>
<keyword id="KW-1208">Phospholipid metabolism</keyword>
<reference key="1">
    <citation type="submission" date="2008-06" db="EMBL/GenBank/DDBJ databases">
        <title>Complete sequence of Stenotrophomonas maltophilia R551-3.</title>
        <authorList>
            <consortium name="US DOE Joint Genome Institute"/>
            <person name="Lucas S."/>
            <person name="Copeland A."/>
            <person name="Lapidus A."/>
            <person name="Glavina del Rio T."/>
            <person name="Dalin E."/>
            <person name="Tice H."/>
            <person name="Pitluck S."/>
            <person name="Chain P."/>
            <person name="Malfatti S."/>
            <person name="Shin M."/>
            <person name="Vergez L."/>
            <person name="Lang D."/>
            <person name="Schmutz J."/>
            <person name="Larimer F."/>
            <person name="Land M."/>
            <person name="Hauser L."/>
            <person name="Kyrpides N."/>
            <person name="Mikhailova N."/>
            <person name="Taghavi S."/>
            <person name="Monchy S."/>
            <person name="Newman L."/>
            <person name="Vangronsveld J."/>
            <person name="van der Lelie D."/>
            <person name="Richardson P."/>
        </authorList>
    </citation>
    <scope>NUCLEOTIDE SEQUENCE [LARGE SCALE GENOMIC DNA]</scope>
    <source>
        <strain>R551-3</strain>
    </source>
</reference>
<protein>
    <recommendedName>
        <fullName evidence="1">Glycerol-3-phosphate dehydrogenase [NAD(P)+]</fullName>
        <ecNumber evidence="1">1.1.1.94</ecNumber>
    </recommendedName>
    <alternativeName>
        <fullName evidence="1">NAD(P)(+)-dependent glycerol-3-phosphate dehydrogenase</fullName>
    </alternativeName>
    <alternativeName>
        <fullName evidence="1">NAD(P)H-dependent dihydroxyacetone-phosphate reductase</fullName>
    </alternativeName>
</protein>
<gene>
    <name evidence="1" type="primary">gpsA</name>
    <name type="ordered locus">Smal_0136</name>
</gene>
<accession>B4SSF9</accession>
<dbReference type="EC" id="1.1.1.94" evidence="1"/>
<dbReference type="EMBL" id="CP001111">
    <property type="protein sequence ID" value="ACF49841.1"/>
    <property type="molecule type" value="Genomic_DNA"/>
</dbReference>
<dbReference type="RefSeq" id="WP_004134677.1">
    <property type="nucleotide sequence ID" value="NC_011071.1"/>
</dbReference>
<dbReference type="SMR" id="B4SSF9"/>
<dbReference type="STRING" id="391008.Smal_0136"/>
<dbReference type="KEGG" id="smt:Smal_0136"/>
<dbReference type="eggNOG" id="COG0240">
    <property type="taxonomic scope" value="Bacteria"/>
</dbReference>
<dbReference type="HOGENOM" id="CLU_033449_0_2_6"/>
<dbReference type="OrthoDB" id="9812273at2"/>
<dbReference type="UniPathway" id="UPA00940"/>
<dbReference type="Proteomes" id="UP000001867">
    <property type="component" value="Chromosome"/>
</dbReference>
<dbReference type="GO" id="GO:0005829">
    <property type="term" value="C:cytosol"/>
    <property type="evidence" value="ECO:0007669"/>
    <property type="project" value="TreeGrafter"/>
</dbReference>
<dbReference type="GO" id="GO:0047952">
    <property type="term" value="F:glycerol-3-phosphate dehydrogenase [NAD(P)+] activity"/>
    <property type="evidence" value="ECO:0007669"/>
    <property type="project" value="UniProtKB-UniRule"/>
</dbReference>
<dbReference type="GO" id="GO:0051287">
    <property type="term" value="F:NAD binding"/>
    <property type="evidence" value="ECO:0007669"/>
    <property type="project" value="InterPro"/>
</dbReference>
<dbReference type="GO" id="GO:0005975">
    <property type="term" value="P:carbohydrate metabolic process"/>
    <property type="evidence" value="ECO:0007669"/>
    <property type="project" value="InterPro"/>
</dbReference>
<dbReference type="GO" id="GO:0046167">
    <property type="term" value="P:glycerol-3-phosphate biosynthetic process"/>
    <property type="evidence" value="ECO:0007669"/>
    <property type="project" value="UniProtKB-UniRule"/>
</dbReference>
<dbReference type="GO" id="GO:0046168">
    <property type="term" value="P:glycerol-3-phosphate catabolic process"/>
    <property type="evidence" value="ECO:0007669"/>
    <property type="project" value="InterPro"/>
</dbReference>
<dbReference type="GO" id="GO:0046474">
    <property type="term" value="P:glycerophospholipid biosynthetic process"/>
    <property type="evidence" value="ECO:0007669"/>
    <property type="project" value="TreeGrafter"/>
</dbReference>
<dbReference type="FunFam" id="1.10.1040.10:FF:000001">
    <property type="entry name" value="Glycerol-3-phosphate dehydrogenase [NAD(P)+]"/>
    <property type="match status" value="1"/>
</dbReference>
<dbReference type="FunFam" id="3.40.50.720:FF:000019">
    <property type="entry name" value="Glycerol-3-phosphate dehydrogenase [NAD(P)+]"/>
    <property type="match status" value="1"/>
</dbReference>
<dbReference type="Gene3D" id="1.10.1040.10">
    <property type="entry name" value="N-(1-d-carboxylethyl)-l-norvaline Dehydrogenase, domain 2"/>
    <property type="match status" value="1"/>
</dbReference>
<dbReference type="Gene3D" id="3.40.50.720">
    <property type="entry name" value="NAD(P)-binding Rossmann-like Domain"/>
    <property type="match status" value="1"/>
</dbReference>
<dbReference type="HAMAP" id="MF_00394">
    <property type="entry name" value="NAD_Glyc3P_dehydrog"/>
    <property type="match status" value="1"/>
</dbReference>
<dbReference type="InterPro" id="IPR008927">
    <property type="entry name" value="6-PGluconate_DH-like_C_sf"/>
</dbReference>
<dbReference type="InterPro" id="IPR013328">
    <property type="entry name" value="6PGD_dom2"/>
</dbReference>
<dbReference type="InterPro" id="IPR006168">
    <property type="entry name" value="G3P_DH_NAD-dep"/>
</dbReference>
<dbReference type="InterPro" id="IPR006109">
    <property type="entry name" value="G3P_DH_NAD-dep_C"/>
</dbReference>
<dbReference type="InterPro" id="IPR011128">
    <property type="entry name" value="G3P_DH_NAD-dep_N"/>
</dbReference>
<dbReference type="InterPro" id="IPR036291">
    <property type="entry name" value="NAD(P)-bd_dom_sf"/>
</dbReference>
<dbReference type="NCBIfam" id="NF000940">
    <property type="entry name" value="PRK00094.1-2"/>
    <property type="match status" value="1"/>
</dbReference>
<dbReference type="NCBIfam" id="NF000942">
    <property type="entry name" value="PRK00094.1-4"/>
    <property type="match status" value="1"/>
</dbReference>
<dbReference type="PANTHER" id="PTHR11728">
    <property type="entry name" value="GLYCEROL-3-PHOSPHATE DEHYDROGENASE"/>
    <property type="match status" value="1"/>
</dbReference>
<dbReference type="PANTHER" id="PTHR11728:SF1">
    <property type="entry name" value="GLYCEROL-3-PHOSPHATE DEHYDROGENASE [NAD(+)] 2, CHLOROPLASTIC"/>
    <property type="match status" value="1"/>
</dbReference>
<dbReference type="Pfam" id="PF07479">
    <property type="entry name" value="NAD_Gly3P_dh_C"/>
    <property type="match status" value="1"/>
</dbReference>
<dbReference type="Pfam" id="PF01210">
    <property type="entry name" value="NAD_Gly3P_dh_N"/>
    <property type="match status" value="1"/>
</dbReference>
<dbReference type="PIRSF" id="PIRSF000114">
    <property type="entry name" value="Glycerol-3-P_dh"/>
    <property type="match status" value="1"/>
</dbReference>
<dbReference type="PRINTS" id="PR00077">
    <property type="entry name" value="GPDHDRGNASE"/>
</dbReference>
<dbReference type="SUPFAM" id="SSF48179">
    <property type="entry name" value="6-phosphogluconate dehydrogenase C-terminal domain-like"/>
    <property type="match status" value="1"/>
</dbReference>
<dbReference type="SUPFAM" id="SSF51735">
    <property type="entry name" value="NAD(P)-binding Rossmann-fold domains"/>
    <property type="match status" value="1"/>
</dbReference>
<dbReference type="PROSITE" id="PS00957">
    <property type="entry name" value="NAD_G3PDH"/>
    <property type="match status" value="1"/>
</dbReference>